<evidence type="ECO:0000250" key="1">
    <source>
        <dbReference type="UniProtKB" id="P41493"/>
    </source>
</evidence>
<evidence type="ECO:0000255" key="2"/>
<evidence type="ECO:0000269" key="3">
    <source>
    </source>
</evidence>
<evidence type="ECO:0000303" key="4">
    <source>
    </source>
</evidence>
<evidence type="ECO:0000305" key="5"/>
<organism>
    <name type="scientific">Neostylopyga rhombifolia</name>
    <name type="common">Harlequin cockroach</name>
    <dbReference type="NCBI Taxonomy" id="304879"/>
    <lineage>
        <taxon>Eukaryota</taxon>
        <taxon>Metazoa</taxon>
        <taxon>Ecdysozoa</taxon>
        <taxon>Arthropoda</taxon>
        <taxon>Hexapoda</taxon>
        <taxon>Insecta</taxon>
        <taxon>Pterygota</taxon>
        <taxon>Neoptera</taxon>
        <taxon>Polyneoptera</taxon>
        <taxon>Dictyoptera</taxon>
        <taxon>Blattodea</taxon>
        <taxon>Blattoidea</taxon>
        <taxon>Blattidae</taxon>
        <taxon>Blattinae</taxon>
        <taxon>Neostylopyga</taxon>
    </lineage>
</organism>
<comment type="function">
    <text evidence="1">Myotropic peptide.</text>
</comment>
<comment type="subcellular location">
    <subcellularLocation>
        <location evidence="5">Secreted</location>
    </subcellularLocation>
</comment>
<comment type="similarity">
    <text evidence="2">Belongs to the gastrin/cholecystokinin family.</text>
</comment>
<accession>P85686</accession>
<sequence>EQFDDYGHMRF</sequence>
<name>SK1_NEORO</name>
<protein>
    <recommendedName>
        <fullName evidence="4">Sulfakinin-1</fullName>
        <shortName evidence="4">NeoRh-SK-1</shortName>
    </recommendedName>
</protein>
<reference evidence="5" key="1">
    <citation type="journal article" date="2009" name="BMC Evol. Biol.">
        <title>A proteomic approach for studying insect phylogeny: CAPA peptides of ancient insect taxa (Dictyoptera, Blattoptera) as a test case.</title>
        <authorList>
            <person name="Roth S."/>
            <person name="Fromm B."/>
            <person name="Gaede G."/>
            <person name="Predel R."/>
        </authorList>
    </citation>
    <scope>PROTEIN SEQUENCE</scope>
    <scope>AMIDATION AT PHE-11</scope>
    <source>
        <tissue evidence="3">Corpora cardiaca</tissue>
    </source>
</reference>
<proteinExistence type="evidence at protein level"/>
<dbReference type="GO" id="GO:0005576">
    <property type="term" value="C:extracellular region"/>
    <property type="evidence" value="ECO:0007669"/>
    <property type="project" value="UniProtKB-SubCell"/>
</dbReference>
<dbReference type="GO" id="GO:0005179">
    <property type="term" value="F:hormone activity"/>
    <property type="evidence" value="ECO:0007669"/>
    <property type="project" value="UniProtKB-KW"/>
</dbReference>
<dbReference type="GO" id="GO:0007218">
    <property type="term" value="P:neuropeptide signaling pathway"/>
    <property type="evidence" value="ECO:0007669"/>
    <property type="project" value="UniProtKB-KW"/>
</dbReference>
<dbReference type="InterPro" id="IPR013152">
    <property type="entry name" value="Gastrin/cholecystokinin_CS"/>
</dbReference>
<dbReference type="InterPro" id="IPR013259">
    <property type="entry name" value="Sulfakinin"/>
</dbReference>
<dbReference type="Pfam" id="PF08257">
    <property type="entry name" value="Sulfakinin"/>
    <property type="match status" value="1"/>
</dbReference>
<dbReference type="PROSITE" id="PS00259">
    <property type="entry name" value="GASTRIN"/>
    <property type="match status" value="1"/>
</dbReference>
<keyword id="KW-0027">Amidation</keyword>
<keyword id="KW-0903">Direct protein sequencing</keyword>
<keyword id="KW-0372">Hormone</keyword>
<keyword id="KW-0527">Neuropeptide</keyword>
<keyword id="KW-0964">Secreted</keyword>
<keyword id="KW-0765">Sulfation</keyword>
<feature type="peptide" id="PRO_0000378886" description="Sulfakinin-1" evidence="3">
    <location>
        <begin position="1"/>
        <end position="11"/>
    </location>
</feature>
<feature type="modified residue" description="Sulfotyrosine" evidence="1">
    <location>
        <position position="6"/>
    </location>
</feature>
<feature type="modified residue" description="Phenylalanine amide" evidence="3">
    <location>
        <position position="11"/>
    </location>
</feature>